<proteinExistence type="evidence at protein level"/>
<evidence type="ECO:0000250" key="1">
    <source>
        <dbReference type="UniProtKB" id="Q5SV80"/>
    </source>
</evidence>
<evidence type="ECO:0000255" key="2">
    <source>
        <dbReference type="PROSITE-ProRule" id="PRU00116"/>
    </source>
</evidence>
<evidence type="ECO:0000255" key="3">
    <source>
        <dbReference type="PROSITE-ProRule" id="PRU00782"/>
    </source>
</evidence>
<evidence type="ECO:0000269" key="4">
    <source>
    </source>
</evidence>
<evidence type="ECO:0000269" key="5">
    <source>
    </source>
</evidence>
<evidence type="ECO:0000269" key="6">
    <source>
    </source>
</evidence>
<evidence type="ECO:0000269" key="7">
    <source>
    </source>
</evidence>
<evidence type="ECO:0000269" key="8">
    <source>
    </source>
</evidence>
<evidence type="ECO:0000269" key="9">
    <source ref="4"/>
</evidence>
<evidence type="ECO:0000303" key="10">
    <source>
    </source>
</evidence>
<evidence type="ECO:0000303" key="11">
    <source>
    </source>
</evidence>
<evidence type="ECO:0000303" key="12">
    <source>
    </source>
</evidence>
<evidence type="ECO:0000303" key="13">
    <source ref="2"/>
</evidence>
<evidence type="ECO:0000305" key="14"/>
<evidence type="ECO:0000305" key="15">
    <source>
    </source>
</evidence>
<evidence type="ECO:0000312" key="16">
    <source>
        <dbReference type="HGNC" id="HGNC:26234"/>
    </source>
</evidence>
<evidence type="ECO:0007744" key="17">
    <source>
    </source>
</evidence>
<keyword id="KW-0009">Actin-binding</keyword>
<keyword id="KW-0025">Alternative splicing</keyword>
<keyword id="KW-0067">ATP-binding</keyword>
<keyword id="KW-0963">Cytoplasm</keyword>
<keyword id="KW-0206">Cytoskeleton</keyword>
<keyword id="KW-0472">Membrane</keyword>
<keyword id="KW-0496">Mitochondrion</keyword>
<keyword id="KW-1000">Mitochondrion outer membrane</keyword>
<keyword id="KW-0505">Motor protein</keyword>
<keyword id="KW-0518">Myosin</keyword>
<keyword id="KW-0547">Nucleotide-binding</keyword>
<keyword id="KW-0597">Phosphoprotein</keyword>
<keyword id="KW-1267">Proteomics identification</keyword>
<keyword id="KW-1185">Reference proteome</keyword>
<keyword id="KW-0677">Repeat</keyword>
<name>MYO19_HUMAN</name>
<accession>Q96H55</accession>
<accession>Q59GS4</accession>
<accession>Q9H5X2</accession>
<gene>
    <name evidence="12 16" type="primary">MYO19</name>
    <name evidence="16" type="synonym">MYOHD1</name>
</gene>
<protein>
    <recommendedName>
        <fullName evidence="12">Unconventional myosin-XIX</fullName>
    </recommendedName>
    <alternativeName>
        <fullName evidence="16">Myosin head domain-containing protein 1</fullName>
    </alternativeName>
</protein>
<organism>
    <name type="scientific">Homo sapiens</name>
    <name type="common">Human</name>
    <dbReference type="NCBI Taxonomy" id="9606"/>
    <lineage>
        <taxon>Eukaryota</taxon>
        <taxon>Metazoa</taxon>
        <taxon>Chordata</taxon>
        <taxon>Craniata</taxon>
        <taxon>Vertebrata</taxon>
        <taxon>Euteleostomi</taxon>
        <taxon>Mammalia</taxon>
        <taxon>Eutheria</taxon>
        <taxon>Euarchontoglires</taxon>
        <taxon>Primates</taxon>
        <taxon>Haplorrhini</taxon>
        <taxon>Catarrhini</taxon>
        <taxon>Hominidae</taxon>
        <taxon>Homo</taxon>
    </lineage>
</organism>
<sequence>MLQQVNGHNPGSDGQAREYLREDLQEFLGGEVLLYKLDDLTRVNPVTLETVLRCLQARYMADTFYTNAGCTLVALNPFKPVPQLYSPELMREYHAAPQPQKLKPHVFTVGEQTYRNVKSLIEPVNQSIVVSGESGAGKTWTSRCLMKFYAVVATSPASWESHKIAERIEQRILNSNPVMEAFGNACTLRNNNSSRFGKFIQLQLNRAQQMTGAAVQTYLLEKTRVACQASSERNFHIFYQICKGASEDERLQWHLPEGAAFSWLPNPERSLEEDCFEVTREAMLHLGIDTPTQNNIFKVLAGLLHLGNIQFAASEDEAQPCQPMDDAKYSVRTAASLLGLPEDVLLEMVQIRTIRAGRQQQVFRKPCARAECDTRRDCLAKLIYARLFDWLVSVINSSICADTDSWTTFIGLLDVYGFESFPDNSLEQLCINYANEKLQQHFVAHYLRAQQEEYAVEGLEWSFINYQDNQPCLDLIEGSPISICSLINEECRLNRPSSAAQLQTRIETALAGSPCLGHNKLSREPSFIVVHYAGPVRYHTAGLVEKNKDPIPPELTRLLQQSQDPLLMGLFPTNPKEKTQEEPPGQSRAPVLTVVSKFKASLEQLLQVLHSTTPHYIRCIKPNSQGQAQTFLQEEVLSQLEACGLVETIHISAAGFPIRVSHRNFVERYKLLRRLHPCTSSGPDSPYPAKGLPEWCPHSEEATLEPLIQDILHTLPVLTQAAAITGDSAEAMPAPMHCGRTKVFMTDSMLELLECGRARVLEQCARCIQGGWRRHRHREQERQWRAVMLIQAAIRSWLTRKHIQRLHAAATVIKRAWQKWRIRMACLAAKELDGVEEKHFSQAPCSLSTSPLQTRLLEAIIRLWPLGLVLANTAMGVGSFQRKLVVWACLQLPRGSPSSYTVQTAQDQAGVTSIRALPQGSIKFHCRKSPLRYADICPEPSPYSITGFNQILLERHRLIHVTSSAFTGLG</sequence>
<feature type="chain" id="PRO_0000332969" description="Unconventional myosin-XIX">
    <location>
        <begin position="1"/>
        <end position="970"/>
    </location>
</feature>
<feature type="domain" description="Myosin motor" evidence="3">
    <location>
        <begin position="35"/>
        <end position="758"/>
    </location>
</feature>
<feature type="domain" description="IQ 1" evidence="2">
    <location>
        <begin position="759"/>
        <end position="779"/>
    </location>
</feature>
<feature type="domain" description="IQ 2" evidence="2">
    <location>
        <begin position="783"/>
        <end position="812"/>
    </location>
</feature>
<feature type="region of interest" description="Actin-binding" evidence="3">
    <location>
        <begin position="602"/>
        <end position="624"/>
    </location>
</feature>
<feature type="region of interest" description="MyMOMA region" evidence="4 8">
    <location>
        <begin position="824"/>
        <end position="970"/>
    </location>
</feature>
<feature type="binding site" evidence="3">
    <location>
        <begin position="132"/>
        <end position="139"/>
    </location>
    <ligand>
        <name>ATP</name>
        <dbReference type="ChEBI" id="CHEBI:30616"/>
    </ligand>
</feature>
<feature type="modified residue" description="Phosphoserine" evidence="17">
    <location>
        <position position="685"/>
    </location>
</feature>
<feature type="splice variant" id="VSP_033402" description="In isoform 2." evidence="10">
    <original>LAGLLHLGNIQFAASEDE</original>
    <variation>RRKATPLKFGRDDGQPFA</variation>
    <location>
        <begin position="300"/>
        <end position="317"/>
    </location>
</feature>
<feature type="splice variant" id="VSP_033403" description="In isoform 2." evidence="10">
    <location>
        <begin position="318"/>
        <end position="970"/>
    </location>
</feature>
<feature type="splice variant" id="VSP_033404" description="In isoform 4." evidence="11">
    <location>
        <begin position="439"/>
        <end position="638"/>
    </location>
</feature>
<feature type="splice variant" id="VSP_033405" description="In isoform 3." evidence="13">
    <original>V</original>
    <variation>A</variation>
    <location>
        <position position="636"/>
    </location>
</feature>
<feature type="splice variant" id="VSP_033406" description="In isoform 3." evidence="13">
    <location>
        <begin position="637"/>
        <end position="970"/>
    </location>
</feature>
<feature type="sequence variant" id="VAR_043018" description="In dbSNP:rs2306595." evidence="9">
    <original>N</original>
    <variation>S</variation>
    <location>
        <position position="176"/>
    </location>
</feature>
<feature type="sequence variant" id="VAR_043019" description="In dbSNP:rs9890918.">
    <original>Q</original>
    <variation>H</variation>
    <location>
        <position position="203"/>
    </location>
</feature>
<feature type="sequence variant" id="VAR_043020" description="In dbSNP:rs7217346.">
    <original>L</original>
    <variation>I</variation>
    <location>
        <position position="475"/>
    </location>
</feature>
<feature type="mutagenesis site" description="Rigor-like phenotype due to disruption of ATP-binding. Does not affect localization to mitochondrion." evidence="5">
    <original>G</original>
    <variation>R</variation>
    <location>
        <position position="135"/>
    </location>
</feature>
<feature type="mutagenesis site" description="Does not affect localization to mitochondrion outer membrane." evidence="8">
    <original>R</original>
    <variation>A</variation>
    <location>
        <position position="855"/>
    </location>
</feature>
<feature type="mutagenesis site" description="Abolishes localization to mitochondrion outer membrane." evidence="8">
    <original>RK</original>
    <variation>AA</variation>
    <location>
        <begin position="882"/>
        <end position="883"/>
    </location>
</feature>
<feature type="mutagenesis site" description="Does not affect localization to mitochondrion outer membrane." evidence="8">
    <original>R</original>
    <variation>A</variation>
    <location>
        <position position="915"/>
    </location>
</feature>
<feature type="mutagenesis site" description="Does not affect localization to mitochondrion outer membrane." evidence="8">
    <original>K</original>
    <variation>A</variation>
    <location>
        <position position="923"/>
    </location>
</feature>
<feature type="mutagenesis site" description="Does not affect localization to mitochondrion outer membrane." evidence="8">
    <original>RK</original>
    <variation>AA</variation>
    <location>
        <begin position="927"/>
        <end position="928"/>
    </location>
</feature>
<dbReference type="EMBL" id="AK026518">
    <property type="protein sequence ID" value="BAB15495.1"/>
    <property type="molecule type" value="mRNA"/>
</dbReference>
<dbReference type="EMBL" id="AB209035">
    <property type="protein sequence ID" value="BAD92272.1"/>
    <property type="status" value="ALT_INIT"/>
    <property type="molecule type" value="mRNA"/>
</dbReference>
<dbReference type="EMBL" id="AC126327">
    <property type="status" value="NOT_ANNOTATED_CDS"/>
    <property type="molecule type" value="Genomic_DNA"/>
</dbReference>
<dbReference type="EMBL" id="CH471199">
    <property type="protein sequence ID" value="EAW57557.1"/>
    <property type="molecule type" value="Genomic_DNA"/>
</dbReference>
<dbReference type="EMBL" id="BC008900">
    <property type="protein sequence ID" value="AAH08900.1"/>
    <property type="molecule type" value="mRNA"/>
</dbReference>
<dbReference type="CCDS" id="CCDS45654.1">
    <molecule id="Q96H55-4"/>
</dbReference>
<dbReference type="CCDS" id="CCDS54112.1">
    <molecule id="Q96H55-1"/>
</dbReference>
<dbReference type="CCDS" id="CCDS59283.1">
    <molecule id="Q96H55-2"/>
</dbReference>
<dbReference type="RefSeq" id="NP_001028752.1">
    <molecule id="Q96H55-2"/>
    <property type="nucleotide sequence ID" value="NM_001033580.3"/>
</dbReference>
<dbReference type="RefSeq" id="NP_001157207.1">
    <molecule id="Q96H55-1"/>
    <property type="nucleotide sequence ID" value="NM_001163735.2"/>
</dbReference>
<dbReference type="RefSeq" id="NP_079385.2">
    <molecule id="Q96H55-4"/>
    <property type="nucleotide sequence ID" value="NM_025109.5"/>
</dbReference>
<dbReference type="RefSeq" id="XP_047292789.1">
    <molecule id="Q96H55-1"/>
    <property type="nucleotide sequence ID" value="XM_047436833.1"/>
</dbReference>
<dbReference type="RefSeq" id="XP_047292790.1">
    <molecule id="Q96H55-1"/>
    <property type="nucleotide sequence ID" value="XM_047436834.1"/>
</dbReference>
<dbReference type="RefSeq" id="XP_047292791.1">
    <molecule id="Q96H55-1"/>
    <property type="nucleotide sequence ID" value="XM_047436835.1"/>
</dbReference>
<dbReference type="RefSeq" id="XP_054173362.1">
    <molecule id="Q96H55-1"/>
    <property type="nucleotide sequence ID" value="XM_054317387.1"/>
</dbReference>
<dbReference type="RefSeq" id="XP_054173363.1">
    <molecule id="Q96H55-1"/>
    <property type="nucleotide sequence ID" value="XM_054317388.1"/>
</dbReference>
<dbReference type="RefSeq" id="XP_054173364.1">
    <molecule id="Q96H55-1"/>
    <property type="nucleotide sequence ID" value="XM_054317389.1"/>
</dbReference>
<dbReference type="RefSeq" id="XP_054185337.1">
    <molecule id="Q96H55-1"/>
    <property type="nucleotide sequence ID" value="XM_054329362.1"/>
</dbReference>
<dbReference type="RefSeq" id="XP_054185338.1">
    <molecule id="Q96H55-1"/>
    <property type="nucleotide sequence ID" value="XM_054329363.1"/>
</dbReference>
<dbReference type="RefSeq" id="XP_054185339.1">
    <molecule id="Q96H55-1"/>
    <property type="nucleotide sequence ID" value="XM_054329364.1"/>
</dbReference>
<dbReference type="SMR" id="Q96H55"/>
<dbReference type="BioGRID" id="123161">
    <property type="interactions" value="291"/>
</dbReference>
<dbReference type="FunCoup" id="Q96H55">
    <property type="interactions" value="1218"/>
</dbReference>
<dbReference type="IntAct" id="Q96H55">
    <property type="interactions" value="231"/>
</dbReference>
<dbReference type="MINT" id="Q96H55"/>
<dbReference type="STRING" id="9606.ENSP00000479518"/>
<dbReference type="iPTMnet" id="Q96H55"/>
<dbReference type="PhosphoSitePlus" id="Q96H55"/>
<dbReference type="SwissPalm" id="Q96H55"/>
<dbReference type="BioMuta" id="MYO19"/>
<dbReference type="DMDM" id="189083208"/>
<dbReference type="jPOST" id="Q96H55"/>
<dbReference type="MassIVE" id="Q96H55"/>
<dbReference type="PaxDb" id="9606-ENSP00000479518"/>
<dbReference type="PeptideAtlas" id="Q96H55"/>
<dbReference type="ProteomicsDB" id="76702">
    <molecule id="Q96H55-1"/>
</dbReference>
<dbReference type="ProteomicsDB" id="76703">
    <molecule id="Q96H55-2"/>
</dbReference>
<dbReference type="ProteomicsDB" id="76704">
    <molecule id="Q96H55-3"/>
</dbReference>
<dbReference type="ProteomicsDB" id="76705">
    <molecule id="Q96H55-4"/>
</dbReference>
<dbReference type="Pumba" id="Q96H55"/>
<dbReference type="Antibodypedia" id="73086">
    <property type="antibodies" value="146 antibodies from 26 providers"/>
</dbReference>
<dbReference type="DNASU" id="80179"/>
<dbReference type="Ensembl" id="ENST00000610930.4">
    <molecule id="Q96H55-4"/>
    <property type="protein sequence ID" value="ENSP00000478437.1"/>
    <property type="gene ID" value="ENSG00000278259.5"/>
</dbReference>
<dbReference type="Ensembl" id="ENST00000610992.4">
    <molecule id="Q96H55-3"/>
    <property type="protein sequence ID" value="ENSP00000480125.1"/>
    <property type="gene ID" value="ENSG00000278259.5"/>
</dbReference>
<dbReference type="Ensembl" id="ENST00000613929.2">
    <molecule id="Q96H55-4"/>
    <property type="protein sequence ID" value="ENSP00000478355.1"/>
    <property type="gene ID" value="ENSG00000278372.4"/>
</dbReference>
<dbReference type="Ensembl" id="ENST00000614623.5">
    <molecule id="Q96H55-1"/>
    <property type="protein sequence ID" value="ENSP00000479518.1"/>
    <property type="gene ID" value="ENSG00000278259.5"/>
</dbReference>
<dbReference type="Ensembl" id="ENST00000618519.4">
    <molecule id="Q96H55-1"/>
    <property type="protein sequence ID" value="ENSP00000480242.1"/>
    <property type="gene ID" value="ENSG00000278372.4"/>
</dbReference>
<dbReference type="Ensembl" id="ENST00000621344.4">
    <molecule id="Q96H55-2"/>
    <property type="protein sequence ID" value="ENSP00000477559.1"/>
    <property type="gene ID" value="ENSG00000278259.5"/>
</dbReference>
<dbReference type="Ensembl" id="ENST00000633264.1">
    <molecule id="Q96H55-3"/>
    <property type="protein sequence ID" value="ENSP00000487617.1"/>
    <property type="gene ID" value="ENSG00000278372.4"/>
</dbReference>
<dbReference type="Ensembl" id="ENST00000633938.1">
    <molecule id="Q96H55-2"/>
    <property type="protein sequence ID" value="ENSP00000488204.1"/>
    <property type="gene ID" value="ENSG00000278372.4"/>
</dbReference>
<dbReference type="GeneID" id="80179"/>
<dbReference type="KEGG" id="hsa:80179"/>
<dbReference type="MANE-Select" id="ENST00000614623.5">
    <property type="protein sequence ID" value="ENSP00000479518.1"/>
    <property type="RefSeq nucleotide sequence ID" value="NM_001163735.2"/>
    <property type="RefSeq protein sequence ID" value="NP_001157207.1"/>
</dbReference>
<dbReference type="UCSC" id="uc032fdu.2">
    <molecule id="Q96H55-1"/>
    <property type="organism name" value="human"/>
</dbReference>
<dbReference type="AGR" id="HGNC:26234"/>
<dbReference type="CTD" id="80179"/>
<dbReference type="DisGeNET" id="80179"/>
<dbReference type="GeneCards" id="MYO19"/>
<dbReference type="HGNC" id="HGNC:26234">
    <property type="gene designation" value="MYO19"/>
</dbReference>
<dbReference type="HPA" id="ENSG00000278259">
    <property type="expression patterns" value="Low tissue specificity"/>
</dbReference>
<dbReference type="MalaCards" id="MYO19"/>
<dbReference type="MIM" id="617379">
    <property type="type" value="gene"/>
</dbReference>
<dbReference type="neXtProt" id="NX_Q96H55"/>
<dbReference type="OpenTargets" id="ENSG00000278259"/>
<dbReference type="PharmGKB" id="PA162396512"/>
<dbReference type="VEuPathDB" id="HostDB:ENSG00000278259"/>
<dbReference type="eggNOG" id="KOG0160">
    <property type="taxonomic scope" value="Eukaryota"/>
</dbReference>
<dbReference type="GeneTree" id="ENSGT00940000157382"/>
<dbReference type="HOGENOM" id="CLU_000192_7_4_1"/>
<dbReference type="InParanoid" id="Q96H55"/>
<dbReference type="OMA" id="CSLETTW"/>
<dbReference type="OrthoDB" id="6108017at2759"/>
<dbReference type="PAN-GO" id="Q96H55">
    <property type="GO annotations" value="7 GO annotations based on evolutionary models"/>
</dbReference>
<dbReference type="PhylomeDB" id="Q96H55"/>
<dbReference type="TreeFam" id="TF328771"/>
<dbReference type="PathwayCommons" id="Q96H55"/>
<dbReference type="Reactome" id="R-HSA-9013419">
    <property type="pathway name" value="RHOT2 GTPase cycle"/>
</dbReference>
<dbReference type="Reactome" id="R-HSA-9013425">
    <property type="pathway name" value="RHOT1 GTPase cycle"/>
</dbReference>
<dbReference type="SignaLink" id="Q96H55"/>
<dbReference type="BioGRID-ORCS" id="80179">
    <property type="hits" value="16 hits in 1145 CRISPR screens"/>
</dbReference>
<dbReference type="ChiTaRS" id="MYO19">
    <property type="organism name" value="human"/>
</dbReference>
<dbReference type="GenomeRNAi" id="80179"/>
<dbReference type="Pharos" id="Q96H55">
    <property type="development level" value="Tbio"/>
</dbReference>
<dbReference type="PRO" id="PR:Q96H55"/>
<dbReference type="Proteomes" id="UP000005640">
    <property type="component" value="Chromosome 17"/>
</dbReference>
<dbReference type="RNAct" id="Q96H55">
    <property type="molecule type" value="protein"/>
</dbReference>
<dbReference type="Bgee" id="ENSG00000278259">
    <property type="expression patterns" value="Expressed in skin of leg and 173 other cell types or tissues"/>
</dbReference>
<dbReference type="ExpressionAtlas" id="Q96H55">
    <property type="expression patterns" value="baseline and differential"/>
</dbReference>
<dbReference type="GO" id="GO:0015629">
    <property type="term" value="C:actin cytoskeleton"/>
    <property type="evidence" value="ECO:0000318"/>
    <property type="project" value="GO_Central"/>
</dbReference>
<dbReference type="GO" id="GO:0005737">
    <property type="term" value="C:cytoplasm"/>
    <property type="evidence" value="ECO:0000318"/>
    <property type="project" value="GO_Central"/>
</dbReference>
<dbReference type="GO" id="GO:0005829">
    <property type="term" value="C:cytosol"/>
    <property type="evidence" value="ECO:0000314"/>
    <property type="project" value="HPA"/>
</dbReference>
<dbReference type="GO" id="GO:0016020">
    <property type="term" value="C:membrane"/>
    <property type="evidence" value="ECO:0000318"/>
    <property type="project" value="GO_Central"/>
</dbReference>
<dbReference type="GO" id="GO:0005741">
    <property type="term" value="C:mitochondrial outer membrane"/>
    <property type="evidence" value="ECO:0000314"/>
    <property type="project" value="UniProtKB"/>
</dbReference>
<dbReference type="GO" id="GO:0005739">
    <property type="term" value="C:mitochondrion"/>
    <property type="evidence" value="ECO:0000314"/>
    <property type="project" value="HPA"/>
</dbReference>
<dbReference type="GO" id="GO:0016459">
    <property type="term" value="C:myosin complex"/>
    <property type="evidence" value="ECO:0007669"/>
    <property type="project" value="UniProtKB-KW"/>
</dbReference>
<dbReference type="GO" id="GO:0003779">
    <property type="term" value="F:actin binding"/>
    <property type="evidence" value="ECO:0000314"/>
    <property type="project" value="UniProtKB"/>
</dbReference>
<dbReference type="GO" id="GO:0051015">
    <property type="term" value="F:actin filament binding"/>
    <property type="evidence" value="ECO:0000318"/>
    <property type="project" value="GO_Central"/>
</dbReference>
<dbReference type="GO" id="GO:0005524">
    <property type="term" value="F:ATP binding"/>
    <property type="evidence" value="ECO:0007669"/>
    <property type="project" value="UniProtKB-KW"/>
</dbReference>
<dbReference type="GO" id="GO:0016887">
    <property type="term" value="F:ATP hydrolysis activity"/>
    <property type="evidence" value="ECO:0000314"/>
    <property type="project" value="UniProtKB"/>
</dbReference>
<dbReference type="GO" id="GO:0000146">
    <property type="term" value="F:microfilament motor activity"/>
    <property type="evidence" value="ECO:0000318"/>
    <property type="project" value="GO_Central"/>
</dbReference>
<dbReference type="GO" id="GO:0032027">
    <property type="term" value="F:myosin light chain binding"/>
    <property type="evidence" value="ECO:0007669"/>
    <property type="project" value="Ensembl"/>
</dbReference>
<dbReference type="GO" id="GO:0060002">
    <property type="term" value="F:plus-end directed microfilament motor activity"/>
    <property type="evidence" value="ECO:0007669"/>
    <property type="project" value="Ensembl"/>
</dbReference>
<dbReference type="GO" id="GO:0007015">
    <property type="term" value="P:actin filament organization"/>
    <property type="evidence" value="ECO:0000318"/>
    <property type="project" value="GO_Central"/>
</dbReference>
<dbReference type="GO" id="GO:0034642">
    <property type="term" value="P:mitochondrion migration along actin filament"/>
    <property type="evidence" value="ECO:0000314"/>
    <property type="project" value="MGI"/>
</dbReference>
<dbReference type="GO" id="GO:0160040">
    <property type="term" value="P:mitocytosis"/>
    <property type="evidence" value="ECO:0007669"/>
    <property type="project" value="Ensembl"/>
</dbReference>
<dbReference type="GO" id="GO:0032465">
    <property type="term" value="P:regulation of cytokinesis"/>
    <property type="evidence" value="ECO:0000315"/>
    <property type="project" value="UniProtKB"/>
</dbReference>
<dbReference type="GO" id="GO:0090140">
    <property type="term" value="P:regulation of mitochondrial fission"/>
    <property type="evidence" value="ECO:0000315"/>
    <property type="project" value="UniProtKB"/>
</dbReference>
<dbReference type="CDD" id="cd14880">
    <property type="entry name" value="MYSc_Myo19"/>
    <property type="match status" value="1"/>
</dbReference>
<dbReference type="FunFam" id="1.20.120.720:FF:000035">
    <property type="entry name" value="Unconventional myosin-XIX"/>
    <property type="match status" value="1"/>
</dbReference>
<dbReference type="FunFam" id="1.20.58.530:FF:000013">
    <property type="entry name" value="Unconventional myosin-XIX"/>
    <property type="match status" value="1"/>
</dbReference>
<dbReference type="FunFam" id="3.40.850.10:FF:000299">
    <property type="entry name" value="Unconventional myosin-XIX"/>
    <property type="match status" value="1"/>
</dbReference>
<dbReference type="FunFam" id="1.10.10.820:FF:000014">
    <property type="entry name" value="unconventional myosin-XIX isoform X1"/>
    <property type="match status" value="1"/>
</dbReference>
<dbReference type="Gene3D" id="1.10.10.820">
    <property type="match status" value="1"/>
</dbReference>
<dbReference type="Gene3D" id="1.20.5.190">
    <property type="match status" value="1"/>
</dbReference>
<dbReference type="Gene3D" id="1.20.5.4820">
    <property type="match status" value="1"/>
</dbReference>
<dbReference type="Gene3D" id="1.20.58.530">
    <property type="match status" value="1"/>
</dbReference>
<dbReference type="Gene3D" id="3.40.850.10">
    <property type="entry name" value="Kinesin motor domain"/>
    <property type="match status" value="1"/>
</dbReference>
<dbReference type="Gene3D" id="1.20.120.720">
    <property type="entry name" value="Myosin VI head, motor domain, U50 subdomain"/>
    <property type="match status" value="1"/>
</dbReference>
<dbReference type="InterPro" id="IPR036961">
    <property type="entry name" value="Kinesin_motor_dom_sf"/>
</dbReference>
<dbReference type="InterPro" id="IPR001609">
    <property type="entry name" value="Myosin_head_motor_dom-like"/>
</dbReference>
<dbReference type="InterPro" id="IPR036035">
    <property type="entry name" value="MYSc_Myo19"/>
</dbReference>
<dbReference type="InterPro" id="IPR027417">
    <property type="entry name" value="P-loop_NTPase"/>
</dbReference>
<dbReference type="PANTHER" id="PTHR13140">
    <property type="entry name" value="MYOSIN"/>
    <property type="match status" value="1"/>
</dbReference>
<dbReference type="PANTHER" id="PTHR13140:SF289">
    <property type="entry name" value="UNCONVENTIONAL MYOSIN-XIX"/>
    <property type="match status" value="1"/>
</dbReference>
<dbReference type="Pfam" id="PF00063">
    <property type="entry name" value="Myosin_head"/>
    <property type="match status" value="1"/>
</dbReference>
<dbReference type="PRINTS" id="PR00193">
    <property type="entry name" value="MYOSINHEAVY"/>
</dbReference>
<dbReference type="SMART" id="SM00242">
    <property type="entry name" value="MYSc"/>
    <property type="match status" value="1"/>
</dbReference>
<dbReference type="SUPFAM" id="SSF52540">
    <property type="entry name" value="P-loop containing nucleoside triphosphate hydrolases"/>
    <property type="match status" value="1"/>
</dbReference>
<dbReference type="PROSITE" id="PS50096">
    <property type="entry name" value="IQ"/>
    <property type="match status" value="1"/>
</dbReference>
<dbReference type="PROSITE" id="PS51456">
    <property type="entry name" value="MYOSIN_MOTOR"/>
    <property type="match status" value="1"/>
</dbReference>
<comment type="function">
    <text evidence="1 4 6 15">Actin-based motor molecule with ATPase activity that localizes to the mitochondrion outer membrane (PubMed:19932026, PubMed:23568824, PubMed:25447992). Motor protein that moves towards the plus-end of actin filaments (By similarity). Required for mitochondrial inheritance during mitosis (PubMed:25447992). May be involved in mitochondrial transport or positioning (PubMed:23568824).</text>
</comment>
<comment type="subunit">
    <text evidence="1">Myosin is a hexamer of 2 heavy chains and 4 light chains: interacts with myosin light chains MYL9 and MYL12B.</text>
</comment>
<comment type="subcellular location">
    <subcellularLocation>
        <location evidence="4 5 6 7 8">Mitochondrion outer membrane</location>
        <topology evidence="8">Peripheral membrane protein</topology>
    </subcellularLocation>
    <subcellularLocation>
        <location evidence="4">Cytoplasm</location>
        <location evidence="4">Cytoskeleton</location>
    </subcellularLocation>
</comment>
<comment type="alternative products">
    <event type="alternative splicing"/>
    <isoform>
        <id>Q96H55-1</id>
        <name>1</name>
        <sequence type="displayed"/>
    </isoform>
    <isoform>
        <id>Q96H55-2</id>
        <name>2</name>
        <sequence type="described" ref="VSP_033402 VSP_033403"/>
    </isoform>
    <isoform>
        <id>Q96H55-3</id>
        <name>3</name>
        <sequence type="described" ref="VSP_033405 VSP_033406"/>
    </isoform>
    <isoform>
        <id>Q96H55-4</id>
        <name>4</name>
        <sequence type="described" ref="VSP_033404"/>
    </isoform>
</comment>
<comment type="tissue specificity">
    <text evidence="4">Widely expressed in multiple tissues and cell lines.</text>
</comment>
<comment type="domain">
    <text evidence="4 8">The MyMOMA (MYO19-specific mitochondrial outer membrane-association) region mediates association with the mitochondrion outer membrane via electrostatic interaction.</text>
</comment>
<comment type="similarity">
    <text evidence="14">Belongs to the TRAFAC class myosin-kinesin ATPase superfamily. Myosin family.</text>
</comment>
<comment type="sequence caution" evidence="14">
    <conflict type="erroneous initiation">
        <sequence resource="EMBL-CDS" id="BAD92272"/>
    </conflict>
</comment>
<reference key="1">
    <citation type="journal article" date="2004" name="Nat. Genet.">
        <title>Complete sequencing and characterization of 21,243 full-length human cDNAs.</title>
        <authorList>
            <person name="Ota T."/>
            <person name="Suzuki Y."/>
            <person name="Nishikawa T."/>
            <person name="Otsuki T."/>
            <person name="Sugiyama T."/>
            <person name="Irie R."/>
            <person name="Wakamatsu A."/>
            <person name="Hayashi K."/>
            <person name="Sato H."/>
            <person name="Nagai K."/>
            <person name="Kimura K."/>
            <person name="Makita H."/>
            <person name="Sekine M."/>
            <person name="Obayashi M."/>
            <person name="Nishi T."/>
            <person name="Shibahara T."/>
            <person name="Tanaka T."/>
            <person name="Ishii S."/>
            <person name="Yamamoto J."/>
            <person name="Saito K."/>
            <person name="Kawai Y."/>
            <person name="Isono Y."/>
            <person name="Nakamura Y."/>
            <person name="Nagahari K."/>
            <person name="Murakami K."/>
            <person name="Yasuda T."/>
            <person name="Iwayanagi T."/>
            <person name="Wagatsuma M."/>
            <person name="Shiratori A."/>
            <person name="Sudo H."/>
            <person name="Hosoiri T."/>
            <person name="Kaku Y."/>
            <person name="Kodaira H."/>
            <person name="Kondo H."/>
            <person name="Sugawara M."/>
            <person name="Takahashi M."/>
            <person name="Kanda K."/>
            <person name="Yokoi T."/>
            <person name="Furuya T."/>
            <person name="Kikkawa E."/>
            <person name="Omura Y."/>
            <person name="Abe K."/>
            <person name="Kamihara K."/>
            <person name="Katsuta N."/>
            <person name="Sato K."/>
            <person name="Tanikawa M."/>
            <person name="Yamazaki M."/>
            <person name="Ninomiya K."/>
            <person name="Ishibashi T."/>
            <person name="Yamashita H."/>
            <person name="Murakawa K."/>
            <person name="Fujimori K."/>
            <person name="Tanai H."/>
            <person name="Kimata M."/>
            <person name="Watanabe M."/>
            <person name="Hiraoka S."/>
            <person name="Chiba Y."/>
            <person name="Ishida S."/>
            <person name="Ono Y."/>
            <person name="Takiguchi S."/>
            <person name="Watanabe S."/>
            <person name="Yosida M."/>
            <person name="Hotuta T."/>
            <person name="Kusano J."/>
            <person name="Kanehori K."/>
            <person name="Takahashi-Fujii A."/>
            <person name="Hara H."/>
            <person name="Tanase T.-O."/>
            <person name="Nomura Y."/>
            <person name="Togiya S."/>
            <person name="Komai F."/>
            <person name="Hara R."/>
            <person name="Takeuchi K."/>
            <person name="Arita M."/>
            <person name="Imose N."/>
            <person name="Musashino K."/>
            <person name="Yuuki H."/>
            <person name="Oshima A."/>
            <person name="Sasaki N."/>
            <person name="Aotsuka S."/>
            <person name="Yoshikawa Y."/>
            <person name="Matsunawa H."/>
            <person name="Ichihara T."/>
            <person name="Shiohata N."/>
            <person name="Sano S."/>
            <person name="Moriya S."/>
            <person name="Momiyama H."/>
            <person name="Satoh N."/>
            <person name="Takami S."/>
            <person name="Terashima Y."/>
            <person name="Suzuki O."/>
            <person name="Nakagawa S."/>
            <person name="Senoh A."/>
            <person name="Mizoguchi H."/>
            <person name="Goto Y."/>
            <person name="Shimizu F."/>
            <person name="Wakebe H."/>
            <person name="Hishigaki H."/>
            <person name="Watanabe T."/>
            <person name="Sugiyama A."/>
            <person name="Takemoto M."/>
            <person name="Kawakami B."/>
            <person name="Yamazaki M."/>
            <person name="Watanabe K."/>
            <person name="Kumagai A."/>
            <person name="Itakura S."/>
            <person name="Fukuzumi Y."/>
            <person name="Fujimori Y."/>
            <person name="Komiyama M."/>
            <person name="Tashiro H."/>
            <person name="Tanigami A."/>
            <person name="Fujiwara T."/>
            <person name="Ono T."/>
            <person name="Yamada K."/>
            <person name="Fujii Y."/>
            <person name="Ozaki K."/>
            <person name="Hirao M."/>
            <person name="Ohmori Y."/>
            <person name="Kawabata A."/>
            <person name="Hikiji T."/>
            <person name="Kobatake N."/>
            <person name="Inagaki H."/>
            <person name="Ikema Y."/>
            <person name="Okamoto S."/>
            <person name="Okitani R."/>
            <person name="Kawakami T."/>
            <person name="Noguchi S."/>
            <person name="Itoh T."/>
            <person name="Shigeta K."/>
            <person name="Senba T."/>
            <person name="Matsumura K."/>
            <person name="Nakajima Y."/>
            <person name="Mizuno T."/>
            <person name="Morinaga M."/>
            <person name="Sasaki M."/>
            <person name="Togashi T."/>
            <person name="Oyama M."/>
            <person name="Hata H."/>
            <person name="Watanabe M."/>
            <person name="Komatsu T."/>
            <person name="Mizushima-Sugano J."/>
            <person name="Satoh T."/>
            <person name="Shirai Y."/>
            <person name="Takahashi Y."/>
            <person name="Nakagawa K."/>
            <person name="Okumura K."/>
            <person name="Nagase T."/>
            <person name="Nomura N."/>
            <person name="Kikuchi H."/>
            <person name="Masuho Y."/>
            <person name="Yamashita R."/>
            <person name="Nakai K."/>
            <person name="Yada T."/>
            <person name="Nakamura Y."/>
            <person name="Ohara O."/>
            <person name="Isogai T."/>
            <person name="Sugano S."/>
        </authorList>
    </citation>
    <scope>NUCLEOTIDE SEQUENCE [LARGE SCALE MRNA] (ISOFORM 2)</scope>
</reference>
<reference key="2">
    <citation type="submission" date="2005-03" db="EMBL/GenBank/DDBJ databases">
        <authorList>
            <person name="Totoki Y."/>
            <person name="Toyoda A."/>
            <person name="Takeda T."/>
            <person name="Sakaki Y."/>
            <person name="Tanaka A."/>
            <person name="Yokoyama S."/>
            <person name="Ohara O."/>
            <person name="Nagase T."/>
            <person name="Kikuno R.F."/>
        </authorList>
    </citation>
    <scope>NUCLEOTIDE SEQUENCE [LARGE SCALE MRNA] (ISOFORM 3)</scope>
    <source>
        <tissue>Brain</tissue>
    </source>
</reference>
<reference key="3">
    <citation type="journal article" date="2006" name="Nature">
        <title>DNA sequence of human chromosome 17 and analysis of rearrangement in the human lineage.</title>
        <authorList>
            <person name="Zody M.C."/>
            <person name="Garber M."/>
            <person name="Adams D.J."/>
            <person name="Sharpe T."/>
            <person name="Harrow J."/>
            <person name="Lupski J.R."/>
            <person name="Nicholson C."/>
            <person name="Searle S.M."/>
            <person name="Wilming L."/>
            <person name="Young S.K."/>
            <person name="Abouelleil A."/>
            <person name="Allen N.R."/>
            <person name="Bi W."/>
            <person name="Bloom T."/>
            <person name="Borowsky M.L."/>
            <person name="Bugalter B.E."/>
            <person name="Butler J."/>
            <person name="Chang J.L."/>
            <person name="Chen C.-K."/>
            <person name="Cook A."/>
            <person name="Corum B."/>
            <person name="Cuomo C.A."/>
            <person name="de Jong P.J."/>
            <person name="DeCaprio D."/>
            <person name="Dewar K."/>
            <person name="FitzGerald M."/>
            <person name="Gilbert J."/>
            <person name="Gibson R."/>
            <person name="Gnerre S."/>
            <person name="Goldstein S."/>
            <person name="Grafham D.V."/>
            <person name="Grocock R."/>
            <person name="Hafez N."/>
            <person name="Hagopian D.S."/>
            <person name="Hart E."/>
            <person name="Norman C.H."/>
            <person name="Humphray S."/>
            <person name="Jaffe D.B."/>
            <person name="Jones M."/>
            <person name="Kamal M."/>
            <person name="Khodiyar V.K."/>
            <person name="LaButti K."/>
            <person name="Laird G."/>
            <person name="Lehoczky J."/>
            <person name="Liu X."/>
            <person name="Lokyitsang T."/>
            <person name="Loveland J."/>
            <person name="Lui A."/>
            <person name="Macdonald P."/>
            <person name="Major J.E."/>
            <person name="Matthews L."/>
            <person name="Mauceli E."/>
            <person name="McCarroll S.A."/>
            <person name="Mihalev A.H."/>
            <person name="Mudge J."/>
            <person name="Nguyen C."/>
            <person name="Nicol R."/>
            <person name="O'Leary S.B."/>
            <person name="Osoegawa K."/>
            <person name="Schwartz D.C."/>
            <person name="Shaw-Smith C."/>
            <person name="Stankiewicz P."/>
            <person name="Steward C."/>
            <person name="Swarbreck D."/>
            <person name="Venkataraman V."/>
            <person name="Whittaker C.A."/>
            <person name="Yang X."/>
            <person name="Zimmer A.R."/>
            <person name="Bradley A."/>
            <person name="Hubbard T."/>
            <person name="Birren B.W."/>
            <person name="Rogers J."/>
            <person name="Lander E.S."/>
            <person name="Nusbaum C."/>
        </authorList>
    </citation>
    <scope>NUCLEOTIDE SEQUENCE [LARGE SCALE GENOMIC DNA]</scope>
</reference>
<reference key="4">
    <citation type="submission" date="2005-07" db="EMBL/GenBank/DDBJ databases">
        <authorList>
            <person name="Mural R.J."/>
            <person name="Istrail S."/>
            <person name="Sutton G.G."/>
            <person name="Florea L."/>
            <person name="Halpern A.L."/>
            <person name="Mobarry C.M."/>
            <person name="Lippert R."/>
            <person name="Walenz B."/>
            <person name="Shatkay H."/>
            <person name="Dew I."/>
            <person name="Miller J.R."/>
            <person name="Flanigan M.J."/>
            <person name="Edwards N.J."/>
            <person name="Bolanos R."/>
            <person name="Fasulo D."/>
            <person name="Halldorsson B.V."/>
            <person name="Hannenhalli S."/>
            <person name="Turner R."/>
            <person name="Yooseph S."/>
            <person name="Lu F."/>
            <person name="Nusskern D.R."/>
            <person name="Shue B.C."/>
            <person name="Zheng X.H."/>
            <person name="Zhong F."/>
            <person name="Delcher A.L."/>
            <person name="Huson D.H."/>
            <person name="Kravitz S.A."/>
            <person name="Mouchard L."/>
            <person name="Reinert K."/>
            <person name="Remington K.A."/>
            <person name="Clark A.G."/>
            <person name="Waterman M.S."/>
            <person name="Eichler E.E."/>
            <person name="Adams M.D."/>
            <person name="Hunkapiller M.W."/>
            <person name="Myers E.W."/>
            <person name="Venter J.C."/>
        </authorList>
    </citation>
    <scope>NUCLEOTIDE SEQUENCE [LARGE SCALE GENOMIC DNA]</scope>
    <scope>VARIANT SER-176</scope>
</reference>
<reference key="5">
    <citation type="journal article" date="2004" name="Genome Res.">
        <title>The status, quality, and expansion of the NIH full-length cDNA project: the Mammalian Gene Collection (MGC).</title>
        <authorList>
            <consortium name="The MGC Project Team"/>
        </authorList>
    </citation>
    <scope>NUCLEOTIDE SEQUENCE [LARGE SCALE MRNA] (ISOFORM 4)</scope>
    <source>
        <tissue>Placenta</tissue>
    </source>
</reference>
<reference key="6">
    <citation type="journal article" date="2009" name="Curr. Biol.">
        <title>Human Myo19 is a novel myosin that associates with mitochondria.</title>
        <authorList>
            <person name="Quintero O.A."/>
            <person name="DiVito M.M."/>
            <person name="Adikes R.C."/>
            <person name="Kortan M.B."/>
            <person name="Case L.B."/>
            <person name="Lier A.J."/>
            <person name="Panaretos N.S."/>
            <person name="Slater S.Q."/>
            <person name="Rengarajan M."/>
            <person name="Feliu M."/>
            <person name="Cheney R.E."/>
        </authorList>
    </citation>
    <scope>FUNCTION</scope>
    <scope>TISSUE SPECIFICITY</scope>
    <scope>TARGETING REGION</scope>
    <scope>SUBCELLULAR LOCATION</scope>
</reference>
<reference key="7">
    <citation type="journal article" date="2013" name="Cytoskeleton">
        <title>Biochemical and bioinformatic analysis of the myosin-XIX motor domain.</title>
        <authorList>
            <person name="Adikes R.C."/>
            <person name="Unrath W.C."/>
            <person name="Yengo C.M."/>
            <person name="Quintero O.A."/>
        </authorList>
    </citation>
    <scope>FUNCTION</scope>
    <scope>SUBCELLULAR LOCATION</scope>
    <scope>MUTAGENESIS OF GLY-135</scope>
</reference>
<reference key="8">
    <citation type="journal article" date="2013" name="J. Proteome Res.">
        <title>Toward a comprehensive characterization of a human cancer cell phosphoproteome.</title>
        <authorList>
            <person name="Zhou H."/>
            <person name="Di Palma S."/>
            <person name="Preisinger C."/>
            <person name="Peng M."/>
            <person name="Polat A.N."/>
            <person name="Heck A.J."/>
            <person name="Mohammed S."/>
        </authorList>
    </citation>
    <scope>PHOSPHORYLATION [LARGE SCALE ANALYSIS] AT SER-685</scope>
    <scope>IDENTIFICATION BY MASS SPECTROMETRY [LARGE SCALE ANALYSIS]</scope>
    <source>
        <tissue>Cervix carcinoma</tissue>
        <tissue>Erythroleukemia</tissue>
    </source>
</reference>
<reference key="9">
    <citation type="journal article" date="2014" name="Curr. Biol.">
        <title>Myo19 ensures symmetric partitioning of mitochondria and coupling of mitochondrial segregation to cell division.</title>
        <authorList>
            <person name="Rohn J.L."/>
            <person name="Patel J.V."/>
            <person name="Neumann B."/>
            <person name="Bulkescher J."/>
            <person name="Mchedlishvili N."/>
            <person name="McMullan R.C."/>
            <person name="Quintero O.A."/>
            <person name="Ellenberg J."/>
            <person name="Baum B."/>
        </authorList>
    </citation>
    <scope>FUNCTION</scope>
    <scope>SUBCELLULAR LOCATION</scope>
</reference>
<reference key="10">
    <citation type="journal article" date="2015" name="Proteomics">
        <title>N-terminome analysis of the human mitochondrial proteome.</title>
        <authorList>
            <person name="Vaca Jacome A.S."/>
            <person name="Rabilloud T."/>
            <person name="Schaeffer-Reiss C."/>
            <person name="Rompais M."/>
            <person name="Ayoub D."/>
            <person name="Lane L."/>
            <person name="Bairoch A."/>
            <person name="Van Dorsselaer A."/>
            <person name="Carapito C."/>
        </authorList>
    </citation>
    <scope>IDENTIFICATION BY MASS SPECTROMETRY [LARGE SCALE ANALYSIS]</scope>
</reference>
<reference key="11">
    <citation type="journal article" date="2016" name="Cytoskeleton">
        <title>Positively charged residues within the MYO19 MyMOMA domain are essential for proper localization of MYO19 to the mitochondrial outer membrane.</title>
        <authorList>
            <person name="Hawthorne J.L."/>
            <person name="Mehta P.R."/>
            <person name="Singh P.P."/>
            <person name="Wong N.Q."/>
            <person name="Quintero O.A."/>
        </authorList>
    </citation>
    <scope>SUBCELLULAR LOCATION</scope>
    <scope>DOMAIN</scope>
    <scope>MUTAGENESIS OF ARG-855; 882-ARG-LYS-883; ARG-915; LYS-923 AND 927-ARG-LYS-928</scope>
</reference>
<reference key="12">
    <citation type="journal article" date="2016" name="J. Cell Sci.">
        <title>Myo19 is an outer mitochondrial membrane motor and effector of starvation-induced filopodia.</title>
        <authorList>
            <person name="Shneyer B.I."/>
            <person name="Usaj M."/>
            <person name="Henn A."/>
        </authorList>
    </citation>
    <scope>SUBCELLULAR LOCATION</scope>
</reference>